<dbReference type="EC" id="6.1.1.22" evidence="1"/>
<dbReference type="EMBL" id="CP000302">
    <property type="protein sequence ID" value="ABE55241.1"/>
    <property type="molecule type" value="Genomic_DNA"/>
</dbReference>
<dbReference type="RefSeq" id="WP_011496397.1">
    <property type="nucleotide sequence ID" value="NC_007954.1"/>
</dbReference>
<dbReference type="SMR" id="Q12MT5"/>
<dbReference type="STRING" id="318161.Sden_1958"/>
<dbReference type="KEGG" id="sdn:Sden_1958"/>
<dbReference type="eggNOG" id="COG0017">
    <property type="taxonomic scope" value="Bacteria"/>
</dbReference>
<dbReference type="HOGENOM" id="CLU_004553_2_0_6"/>
<dbReference type="OrthoDB" id="9762036at2"/>
<dbReference type="Proteomes" id="UP000001982">
    <property type="component" value="Chromosome"/>
</dbReference>
<dbReference type="GO" id="GO:0005737">
    <property type="term" value="C:cytoplasm"/>
    <property type="evidence" value="ECO:0007669"/>
    <property type="project" value="UniProtKB-SubCell"/>
</dbReference>
<dbReference type="GO" id="GO:0004816">
    <property type="term" value="F:asparagine-tRNA ligase activity"/>
    <property type="evidence" value="ECO:0007669"/>
    <property type="project" value="UniProtKB-UniRule"/>
</dbReference>
<dbReference type="GO" id="GO:0005524">
    <property type="term" value="F:ATP binding"/>
    <property type="evidence" value="ECO:0007669"/>
    <property type="project" value="UniProtKB-UniRule"/>
</dbReference>
<dbReference type="GO" id="GO:0003676">
    <property type="term" value="F:nucleic acid binding"/>
    <property type="evidence" value="ECO:0007669"/>
    <property type="project" value="InterPro"/>
</dbReference>
<dbReference type="GO" id="GO:0006421">
    <property type="term" value="P:asparaginyl-tRNA aminoacylation"/>
    <property type="evidence" value="ECO:0007669"/>
    <property type="project" value="UniProtKB-UniRule"/>
</dbReference>
<dbReference type="CDD" id="cd00776">
    <property type="entry name" value="AsxRS_core"/>
    <property type="match status" value="1"/>
</dbReference>
<dbReference type="CDD" id="cd04318">
    <property type="entry name" value="EcAsnRS_like_N"/>
    <property type="match status" value="1"/>
</dbReference>
<dbReference type="FunFam" id="3.30.930.10:FF:000016">
    <property type="entry name" value="Asparagine--tRNA ligase"/>
    <property type="match status" value="1"/>
</dbReference>
<dbReference type="Gene3D" id="3.30.930.10">
    <property type="entry name" value="Bira Bifunctional Protein, Domain 2"/>
    <property type="match status" value="1"/>
</dbReference>
<dbReference type="Gene3D" id="2.40.50.140">
    <property type="entry name" value="Nucleic acid-binding proteins"/>
    <property type="match status" value="1"/>
</dbReference>
<dbReference type="HAMAP" id="MF_00534">
    <property type="entry name" value="Asn_tRNA_synth"/>
    <property type="match status" value="1"/>
</dbReference>
<dbReference type="InterPro" id="IPR004364">
    <property type="entry name" value="Aa-tRNA-synt_II"/>
</dbReference>
<dbReference type="InterPro" id="IPR006195">
    <property type="entry name" value="aa-tRNA-synth_II"/>
</dbReference>
<dbReference type="InterPro" id="IPR045864">
    <property type="entry name" value="aa-tRNA-synth_II/BPL/LPL"/>
</dbReference>
<dbReference type="InterPro" id="IPR004522">
    <property type="entry name" value="Asn-tRNA-ligase"/>
</dbReference>
<dbReference type="InterPro" id="IPR002312">
    <property type="entry name" value="Asp/Asn-tRNA-synth_IIb"/>
</dbReference>
<dbReference type="InterPro" id="IPR012340">
    <property type="entry name" value="NA-bd_OB-fold"/>
</dbReference>
<dbReference type="InterPro" id="IPR004365">
    <property type="entry name" value="NA-bd_OB_tRNA"/>
</dbReference>
<dbReference type="NCBIfam" id="TIGR00457">
    <property type="entry name" value="asnS"/>
    <property type="match status" value="1"/>
</dbReference>
<dbReference type="NCBIfam" id="NF003037">
    <property type="entry name" value="PRK03932.1"/>
    <property type="match status" value="1"/>
</dbReference>
<dbReference type="PANTHER" id="PTHR22594:SF34">
    <property type="entry name" value="ASPARAGINE--TRNA LIGASE, MITOCHONDRIAL-RELATED"/>
    <property type="match status" value="1"/>
</dbReference>
<dbReference type="PANTHER" id="PTHR22594">
    <property type="entry name" value="ASPARTYL/LYSYL-TRNA SYNTHETASE"/>
    <property type="match status" value="1"/>
</dbReference>
<dbReference type="Pfam" id="PF00152">
    <property type="entry name" value="tRNA-synt_2"/>
    <property type="match status" value="1"/>
</dbReference>
<dbReference type="Pfam" id="PF01336">
    <property type="entry name" value="tRNA_anti-codon"/>
    <property type="match status" value="1"/>
</dbReference>
<dbReference type="PRINTS" id="PR01042">
    <property type="entry name" value="TRNASYNTHASP"/>
</dbReference>
<dbReference type="SUPFAM" id="SSF55681">
    <property type="entry name" value="Class II aaRS and biotin synthetases"/>
    <property type="match status" value="1"/>
</dbReference>
<dbReference type="SUPFAM" id="SSF50249">
    <property type="entry name" value="Nucleic acid-binding proteins"/>
    <property type="match status" value="1"/>
</dbReference>
<dbReference type="PROSITE" id="PS50862">
    <property type="entry name" value="AA_TRNA_LIGASE_II"/>
    <property type="match status" value="1"/>
</dbReference>
<gene>
    <name evidence="1" type="primary">asnS</name>
    <name type="ordered locus">Sden_1958</name>
</gene>
<feature type="chain" id="PRO_1000051422" description="Asparagine--tRNA ligase">
    <location>
        <begin position="1"/>
        <end position="466"/>
    </location>
</feature>
<proteinExistence type="inferred from homology"/>
<accession>Q12MT5</accession>
<organism>
    <name type="scientific">Shewanella denitrificans (strain OS217 / ATCC BAA-1090 / DSM 15013)</name>
    <dbReference type="NCBI Taxonomy" id="318161"/>
    <lineage>
        <taxon>Bacteria</taxon>
        <taxon>Pseudomonadati</taxon>
        <taxon>Pseudomonadota</taxon>
        <taxon>Gammaproteobacteria</taxon>
        <taxon>Alteromonadales</taxon>
        <taxon>Shewanellaceae</taxon>
        <taxon>Shewanella</taxon>
    </lineage>
</organism>
<reference key="1">
    <citation type="submission" date="2006-03" db="EMBL/GenBank/DDBJ databases">
        <title>Complete sequence of Shewanella denitrificans OS217.</title>
        <authorList>
            <consortium name="US DOE Joint Genome Institute"/>
            <person name="Copeland A."/>
            <person name="Lucas S."/>
            <person name="Lapidus A."/>
            <person name="Barry K."/>
            <person name="Detter J.C."/>
            <person name="Glavina del Rio T."/>
            <person name="Hammon N."/>
            <person name="Israni S."/>
            <person name="Dalin E."/>
            <person name="Tice H."/>
            <person name="Pitluck S."/>
            <person name="Brettin T."/>
            <person name="Bruce D."/>
            <person name="Han C."/>
            <person name="Tapia R."/>
            <person name="Gilna P."/>
            <person name="Kiss H."/>
            <person name="Schmutz J."/>
            <person name="Larimer F."/>
            <person name="Land M."/>
            <person name="Hauser L."/>
            <person name="Kyrpides N."/>
            <person name="Lykidis A."/>
            <person name="Richardson P."/>
        </authorList>
    </citation>
    <scope>NUCLEOTIDE SEQUENCE [LARGE SCALE GENOMIC DNA]</scope>
    <source>
        <strain>OS217 / ATCC BAA-1090 / DSM 15013</strain>
    </source>
</reference>
<evidence type="ECO:0000255" key="1">
    <source>
        <dbReference type="HAMAP-Rule" id="MF_00534"/>
    </source>
</evidence>
<protein>
    <recommendedName>
        <fullName evidence="1">Asparagine--tRNA ligase</fullName>
        <ecNumber evidence="1">6.1.1.22</ecNumber>
    </recommendedName>
    <alternativeName>
        <fullName evidence="1">Asparaginyl-tRNA synthetase</fullName>
        <shortName evidence="1">AsnRS</shortName>
    </alternativeName>
</protein>
<sequence length="466" mass="52206">MSIASVASVFNGDHAVGSQVTVRGWVRTRRDSKAGISFLALYDGSCFDPIQGVIPNNLPNYDDEVLKLTAGCSLVMTGDVVESPGAGQAFELQVTAVEVTGWVDDPDTYPMAAKRHSIEHLRELAHLRPRTNIIGAVARVRNCLSQAIHRFYHEQGFIWVSTPLITASDCEGAGEMFRVSTLDMENLPRTDAGKVDYDKDFFGKESFLTVSGQLNAETYACALSKVYTFGPTFRAENSNTTRHLAEFWMVEPEVAFATLDDAAKLAEDMLKYAFNAVLNERMDDLSFFNERVDKTVIERLQAFVSSDFAQVDYTDAVEILKNCGKKFEFAVEWGIDLQSEHERYLAEEHFKAPVVVKNYPKDIKAFYMRLNDDGKTVAAMDVLAPGIGEIIGGAQREERLDVLDARLAEMELSQEDYWWYRDLRRYGTVPHAGFGLGFERLVSYVTGVNNIRDVIPFPRAPRSASF</sequence>
<name>SYN_SHEDO</name>
<comment type="catalytic activity">
    <reaction evidence="1">
        <text>tRNA(Asn) + L-asparagine + ATP = L-asparaginyl-tRNA(Asn) + AMP + diphosphate + H(+)</text>
        <dbReference type="Rhea" id="RHEA:11180"/>
        <dbReference type="Rhea" id="RHEA-COMP:9659"/>
        <dbReference type="Rhea" id="RHEA-COMP:9674"/>
        <dbReference type="ChEBI" id="CHEBI:15378"/>
        <dbReference type="ChEBI" id="CHEBI:30616"/>
        <dbReference type="ChEBI" id="CHEBI:33019"/>
        <dbReference type="ChEBI" id="CHEBI:58048"/>
        <dbReference type="ChEBI" id="CHEBI:78442"/>
        <dbReference type="ChEBI" id="CHEBI:78515"/>
        <dbReference type="ChEBI" id="CHEBI:456215"/>
        <dbReference type="EC" id="6.1.1.22"/>
    </reaction>
</comment>
<comment type="subunit">
    <text evidence="1">Homodimer.</text>
</comment>
<comment type="subcellular location">
    <subcellularLocation>
        <location evidence="1">Cytoplasm</location>
    </subcellularLocation>
</comment>
<comment type="similarity">
    <text evidence="1">Belongs to the class-II aminoacyl-tRNA synthetase family.</text>
</comment>
<keyword id="KW-0030">Aminoacyl-tRNA synthetase</keyword>
<keyword id="KW-0067">ATP-binding</keyword>
<keyword id="KW-0963">Cytoplasm</keyword>
<keyword id="KW-0436">Ligase</keyword>
<keyword id="KW-0547">Nucleotide-binding</keyword>
<keyword id="KW-0648">Protein biosynthesis</keyword>
<keyword id="KW-1185">Reference proteome</keyword>